<comment type="function">
    <text evidence="2 3 6 7">Sodium pump that utilizes the energy of pyrophosphate hydrolysis as the driving force for Na(+) movement across the membrane.</text>
</comment>
<comment type="catalytic activity">
    <reaction evidence="2 4 6">
        <text>Na(+)(in) + diphosphate + H2O = Na(+)(out) + 2 phosphate + H(+)</text>
        <dbReference type="Rhea" id="RHEA:57884"/>
        <dbReference type="ChEBI" id="CHEBI:15377"/>
        <dbReference type="ChEBI" id="CHEBI:15378"/>
        <dbReference type="ChEBI" id="CHEBI:29101"/>
        <dbReference type="ChEBI" id="CHEBI:33019"/>
        <dbReference type="ChEBI" id="CHEBI:43474"/>
        <dbReference type="EC" id="7.2.3.1"/>
    </reaction>
</comment>
<comment type="cofactor">
    <cofactor evidence="2 3">
        <name>Mg(2+)</name>
        <dbReference type="ChEBI" id="CHEBI:18420"/>
    </cofactor>
</comment>
<comment type="activity regulation">
    <text evidence="3 4 7">Inhibited by GdCl3. Requires K(+) for maximal activity. K(+) greatly stimulates Na(+) binding. Thermostability depends on the binding of Mg(2+).</text>
</comment>
<comment type="biophysicochemical properties">
    <temperatureDependence>
        <text evidence="3 7">Optimum temperature is 70 degrees Celsius.</text>
    </temperatureDependence>
</comment>
<comment type="subunit">
    <text evidence="2 5 7">Homodimer.</text>
</comment>
<comment type="subcellular location">
    <subcellularLocation>
        <location evidence="2 9">Cell inner membrane</location>
        <topology evidence="2 5">Multi-pass membrane protein</topology>
    </subcellularLocation>
</comment>
<comment type="domain">
    <text evidence="7">Has 16 transmembrane helices and a cytoplasmic domain that contains the active site. Pyrophosphate binding is thought to trigger a conformation change that allows Na(+) release. Has at least two binding sites for Na(+) (PubMed:22837527).</text>
</comment>
<comment type="similarity">
    <text evidence="2">Belongs to the H(+)-translocating pyrophosphatase (TC 3.A.10) family. K(+)-stimulated subfamily.</text>
</comment>
<evidence type="ECO:0000250" key="1"/>
<evidence type="ECO:0000255" key="2">
    <source>
        <dbReference type="HAMAP-Rule" id="MF_01129"/>
    </source>
</evidence>
<evidence type="ECO:0000269" key="3">
    <source>
    </source>
</evidence>
<evidence type="ECO:0000269" key="4">
    <source>
    </source>
</evidence>
<evidence type="ECO:0000269" key="5">
    <source>
    </source>
</evidence>
<evidence type="ECO:0000269" key="6">
    <source>
    </source>
</evidence>
<evidence type="ECO:0000269" key="7">
    <source>
    </source>
</evidence>
<evidence type="ECO:0000305" key="8"/>
<evidence type="ECO:0000305" key="9">
    <source>
    </source>
</evidence>
<evidence type="ECO:0007744" key="10">
    <source>
        <dbReference type="PDB" id="4AV3"/>
    </source>
</evidence>
<evidence type="ECO:0007829" key="11">
    <source>
        <dbReference type="PDB" id="4AV3"/>
    </source>
</evidence>
<evidence type="ECO:0007829" key="12">
    <source>
        <dbReference type="PDB" id="5LZQ"/>
    </source>
</evidence>
<evidence type="ECO:0007829" key="13">
    <source>
        <dbReference type="PDB" id="8B21"/>
    </source>
</evidence>
<feature type="chain" id="PRO_0000217005" description="K(+)-stimulated pyrophosphate-energized sodium pump">
    <location>
        <begin position="1"/>
        <end position="726"/>
    </location>
</feature>
<feature type="topological domain" description="Periplasmic" evidence="7">
    <location>
        <position position="1"/>
    </location>
</feature>
<feature type="transmembrane region" description="Helical">
    <location>
        <begin position="2"/>
        <end position="22"/>
    </location>
</feature>
<feature type="topological domain" description="Cytoplasmic" evidence="7">
    <location>
        <begin position="23"/>
        <end position="46"/>
    </location>
</feature>
<feature type="transmembrane region" description="Helical">
    <location>
        <begin position="47"/>
        <end position="71"/>
    </location>
</feature>
<feature type="topological domain" description="Periplasmic" evidence="7">
    <location>
        <begin position="72"/>
        <end position="73"/>
    </location>
</feature>
<feature type="transmembrane region" description="Helical">
    <location>
        <begin position="74"/>
        <end position="97"/>
    </location>
</feature>
<feature type="topological domain" description="Cytoplasmic" evidence="7">
    <location>
        <begin position="98"/>
        <end position="122"/>
    </location>
</feature>
<feature type="transmembrane region" description="Helical">
    <location>
        <begin position="123"/>
        <end position="153"/>
    </location>
</feature>
<feature type="topological domain" description="Periplasmic" evidence="7">
    <location>
        <begin position="154"/>
        <end position="168"/>
    </location>
</feature>
<feature type="transmembrane region" description="Helical">
    <location>
        <begin position="169"/>
        <end position="197"/>
    </location>
</feature>
<feature type="topological domain" description="Cytoplasmic" evidence="7">
    <location>
        <begin position="198"/>
        <end position="235"/>
    </location>
</feature>
<feature type="transmembrane region" description="Helical">
    <location>
        <begin position="236"/>
        <end position="261"/>
    </location>
</feature>
<feature type="topological domain" description="Periplasmic" evidence="7">
    <location>
        <begin position="262"/>
        <end position="284"/>
    </location>
</feature>
<feature type="transmembrane region" description="Helical">
    <location>
        <begin position="285"/>
        <end position="309"/>
    </location>
</feature>
<feature type="topological domain" description="Cytoplasmic" evidence="7">
    <location>
        <begin position="310"/>
        <end position="320"/>
    </location>
</feature>
<feature type="transmembrane region" description="Helical">
    <location>
        <begin position="321"/>
        <end position="343"/>
    </location>
</feature>
<feature type="topological domain" description="Periplasmic" evidence="7">
    <location>
        <begin position="344"/>
        <end position="358"/>
    </location>
</feature>
<feature type="transmembrane region" description="Helical">
    <location>
        <begin position="359"/>
        <end position="379"/>
    </location>
</feature>
<feature type="topological domain" description="Cytoplasmic" evidence="7">
    <location>
        <begin position="380"/>
        <end position="405"/>
    </location>
</feature>
<feature type="transmembrane region" description="Helical">
    <location>
        <begin position="406"/>
        <end position="430"/>
    </location>
</feature>
<feature type="topological domain" description="Periplasmic" evidence="7">
    <location>
        <begin position="431"/>
        <end position="436"/>
    </location>
</feature>
<feature type="transmembrane region" description="Helical">
    <location>
        <begin position="437"/>
        <end position="463"/>
    </location>
</feature>
<feature type="topological domain" description="Cytoplasmic" evidence="7">
    <location>
        <begin position="464"/>
        <end position="492"/>
    </location>
</feature>
<feature type="transmembrane region" description="Helical">
    <location>
        <begin position="493"/>
        <end position="520"/>
    </location>
</feature>
<feature type="topological domain" description="Periplasmic" evidence="7">
    <location>
        <begin position="521"/>
        <end position="541"/>
    </location>
</feature>
<feature type="transmembrane region" description="Helical">
    <location>
        <begin position="542"/>
        <end position="571"/>
    </location>
</feature>
<feature type="topological domain" description="Cytoplasmic" evidence="7">
    <location>
        <begin position="572"/>
        <end position="601"/>
    </location>
</feature>
<feature type="transmembrane region" description="Helical">
    <location>
        <begin position="602"/>
        <end position="629"/>
    </location>
</feature>
<feature type="topological domain" description="Periplasmic" evidence="7">
    <location>
        <position position="630"/>
    </location>
</feature>
<feature type="transmembrane region" description="Helical">
    <location>
        <begin position="631"/>
        <end position="658"/>
    </location>
</feature>
<feature type="topological domain" description="Cytoplasmic" evidence="7">
    <location>
        <begin position="659"/>
        <end position="697"/>
    </location>
</feature>
<feature type="transmembrane region" description="Helical">
    <location>
        <begin position="698"/>
        <end position="722"/>
    </location>
</feature>
<feature type="topological domain" description="Periplasmic" evidence="7">
    <location>
        <begin position="723"/>
        <end position="726"/>
    </location>
</feature>
<feature type="binding site">
    <location>
        <position position="199"/>
    </location>
    <ligand>
        <name>substrate</name>
    </ligand>
</feature>
<feature type="binding site" evidence="1">
    <location>
        <position position="202"/>
    </location>
    <ligand>
        <name>Mg(2+)</name>
        <dbReference type="ChEBI" id="CHEBI:18420"/>
        <label>1</label>
    </ligand>
</feature>
<feature type="binding site" evidence="1">
    <location>
        <position position="206"/>
    </location>
    <ligand>
        <name>Mg(2+)</name>
        <dbReference type="ChEBI" id="CHEBI:18420"/>
        <label>1</label>
    </ligand>
</feature>
<feature type="binding site" evidence="7">
    <location>
        <position position="229"/>
    </location>
    <ligand>
        <name>Mg(2+)</name>
        <dbReference type="ChEBI" id="CHEBI:18420"/>
        <label>2</label>
    </ligand>
</feature>
<feature type="binding site" evidence="7">
    <location>
        <position position="232"/>
    </location>
    <ligand>
        <name>Mg(2+)</name>
        <dbReference type="ChEBI" id="CHEBI:18420"/>
        <label>2</label>
    </ligand>
</feature>
<feature type="binding site" evidence="7">
    <location>
        <position position="465"/>
    </location>
    <ligand>
        <name>Mg(2+)</name>
        <dbReference type="ChEBI" id="CHEBI:18420"/>
        <label>2</label>
    </ligand>
</feature>
<feature type="binding site" evidence="7 10">
    <location>
        <position position="660"/>
    </location>
    <ligand>
        <name>Ca(2+)</name>
        <dbReference type="ChEBI" id="CHEBI:29108"/>
    </ligand>
</feature>
<feature type="binding site" evidence="7 10">
    <location>
        <position position="688"/>
    </location>
    <ligand>
        <name>Ca(2+)</name>
        <dbReference type="ChEBI" id="CHEBI:29108"/>
    </ligand>
</feature>
<feature type="binding site" evidence="7 10">
    <location>
        <position position="692"/>
    </location>
    <ligand>
        <name>Ca(2+)</name>
        <dbReference type="ChEBI" id="CHEBI:29108"/>
    </ligand>
</feature>
<feature type="binding site">
    <location>
        <position position="695"/>
    </location>
    <ligand>
        <name>substrate</name>
    </ligand>
</feature>
<feature type="site" description="Important for ion transport" evidence="1">
    <location>
        <position position="191"/>
    </location>
</feature>
<feature type="site" description="Important for ion transport" evidence="1">
    <location>
        <position position="236"/>
    </location>
</feature>
<feature type="site" description="Important for ion transport" evidence="1">
    <location>
        <position position="243"/>
    </location>
</feature>
<feature type="site" description="Determinant of potassium dependence" evidence="2 8">
    <location>
        <position position="495"/>
    </location>
</feature>
<feature type="site" description="Important for ion transport" evidence="1">
    <location>
        <position position="696"/>
    </location>
</feature>
<feature type="site" description="Important for ion transport" evidence="1">
    <location>
        <position position="707"/>
    </location>
</feature>
<feature type="mutagenesis site" description="No change in activity." evidence="4">
    <original>D</original>
    <variation>A</variation>
    <location>
        <position position="190"/>
    </location>
</feature>
<feature type="mutagenesis site" description="Silences the K(+)-independent activating Na(+)-binding site." evidence="4">
    <original>D</original>
    <variation>N</variation>
    <location>
        <position position="703"/>
    </location>
</feature>
<feature type="helix" evidence="13">
    <location>
        <begin position="3"/>
        <end position="8"/>
    </location>
</feature>
<feature type="helix" evidence="13">
    <location>
        <begin position="10"/>
        <end position="27"/>
    </location>
</feature>
<feature type="helix" evidence="13">
    <location>
        <begin position="33"/>
        <end position="70"/>
    </location>
</feature>
<feature type="helix" evidence="13">
    <location>
        <begin position="74"/>
        <end position="112"/>
    </location>
</feature>
<feature type="helix" evidence="13">
    <location>
        <begin position="115"/>
        <end position="146"/>
    </location>
</feature>
<feature type="helix" evidence="13">
    <location>
        <begin position="147"/>
        <end position="151"/>
    </location>
</feature>
<feature type="helix" evidence="13">
    <location>
        <begin position="154"/>
        <end position="157"/>
    </location>
</feature>
<feature type="helix" evidence="12">
    <location>
        <begin position="164"/>
        <end position="166"/>
    </location>
</feature>
<feature type="helix" evidence="13">
    <location>
        <begin position="171"/>
        <end position="210"/>
    </location>
</feature>
<feature type="strand" evidence="13">
    <location>
        <begin position="211"/>
        <end position="213"/>
    </location>
</feature>
<feature type="helix" evidence="13">
    <location>
        <begin position="223"/>
        <end position="236"/>
    </location>
</feature>
<feature type="helix" evidence="13">
    <location>
        <begin position="238"/>
        <end position="265"/>
    </location>
</feature>
<feature type="strand" evidence="13">
    <location>
        <begin position="266"/>
        <end position="270"/>
    </location>
</feature>
<feature type="strand" evidence="13">
    <location>
        <begin position="273"/>
        <end position="278"/>
    </location>
</feature>
<feature type="helix" evidence="13">
    <location>
        <begin position="280"/>
        <end position="310"/>
    </location>
</feature>
<feature type="helix" evidence="13">
    <location>
        <begin position="317"/>
        <end position="344"/>
    </location>
</feature>
<feature type="helix" evidence="13">
    <location>
        <begin position="350"/>
        <end position="353"/>
    </location>
</feature>
<feature type="strand" evidence="13">
    <location>
        <begin position="355"/>
        <end position="357"/>
    </location>
</feature>
<feature type="helix" evidence="13">
    <location>
        <begin position="358"/>
        <end position="360"/>
    </location>
</feature>
<feature type="helix" evidence="13">
    <location>
        <begin position="361"/>
        <end position="382"/>
    </location>
</feature>
<feature type="helix" evidence="13">
    <location>
        <begin position="389"/>
        <end position="397"/>
    </location>
</feature>
<feature type="helix" evidence="13">
    <location>
        <begin position="398"/>
        <end position="400"/>
    </location>
</feature>
<feature type="helix" evidence="13">
    <location>
        <begin position="402"/>
        <end position="416"/>
    </location>
</feature>
<feature type="helix" evidence="13">
    <location>
        <begin position="418"/>
        <end position="447"/>
    </location>
</feature>
<feature type="turn" evidence="13">
    <location>
        <begin position="448"/>
        <end position="450"/>
    </location>
</feature>
<feature type="helix" evidence="13">
    <location>
        <begin position="451"/>
        <end position="473"/>
    </location>
</feature>
<feature type="helix" evidence="13">
    <location>
        <begin position="478"/>
        <end position="520"/>
    </location>
</feature>
<feature type="helix" evidence="13">
    <location>
        <begin position="524"/>
        <end position="526"/>
    </location>
</feature>
<feature type="strand" evidence="13">
    <location>
        <begin position="527"/>
        <end position="529"/>
    </location>
</feature>
<feature type="helix" evidence="13">
    <location>
        <begin position="531"/>
        <end position="534"/>
    </location>
</feature>
<feature type="strand" evidence="13">
    <location>
        <begin position="538"/>
        <end position="541"/>
    </location>
</feature>
<feature type="helix" evidence="13">
    <location>
        <begin position="542"/>
        <end position="582"/>
    </location>
</feature>
<feature type="turn" evidence="11">
    <location>
        <begin position="584"/>
        <end position="587"/>
    </location>
</feature>
<feature type="helix" evidence="13">
    <location>
        <begin position="596"/>
        <end position="610"/>
    </location>
</feature>
<feature type="helix" evidence="13">
    <location>
        <begin position="612"/>
        <end position="629"/>
    </location>
</feature>
<feature type="helix" evidence="13">
    <location>
        <begin position="631"/>
        <end position="667"/>
    </location>
</feature>
<feature type="strand" evidence="11">
    <location>
        <begin position="671"/>
        <end position="673"/>
    </location>
</feature>
<feature type="strand" evidence="11">
    <location>
        <begin position="676"/>
        <end position="678"/>
    </location>
</feature>
<feature type="helix" evidence="13">
    <location>
        <begin position="679"/>
        <end position="696"/>
    </location>
</feature>
<feature type="helix" evidence="13">
    <location>
        <begin position="698"/>
        <end position="720"/>
    </location>
</feature>
<proteinExistence type="evidence at protein level"/>
<reference key="1">
    <citation type="journal article" date="1999" name="Nature">
        <title>Evidence for lateral gene transfer between Archaea and Bacteria from genome sequence of Thermotoga maritima.</title>
        <authorList>
            <person name="Nelson K.E."/>
            <person name="Clayton R.A."/>
            <person name="Gill S.R."/>
            <person name="Gwinn M.L."/>
            <person name="Dodson R.J."/>
            <person name="Haft D.H."/>
            <person name="Hickey E.K."/>
            <person name="Peterson J.D."/>
            <person name="Nelson W.C."/>
            <person name="Ketchum K.A."/>
            <person name="McDonald L.A."/>
            <person name="Utterback T.R."/>
            <person name="Malek J.A."/>
            <person name="Linher K.D."/>
            <person name="Garrett M.M."/>
            <person name="Stewart A.M."/>
            <person name="Cotton M.D."/>
            <person name="Pratt M.S."/>
            <person name="Phillips C.A."/>
            <person name="Richardson D.L."/>
            <person name="Heidelberg J.F."/>
            <person name="Sutton G.G."/>
            <person name="Fleischmann R.D."/>
            <person name="Eisen J.A."/>
            <person name="White O."/>
            <person name="Salzberg S.L."/>
            <person name="Smith H.O."/>
            <person name="Venter J.C."/>
            <person name="Fraser C.M."/>
        </authorList>
    </citation>
    <scope>NUCLEOTIDE SEQUENCE [LARGE SCALE GENOMIC DNA]</scope>
    <source>
        <strain>ATCC 43589 / DSM 3109 / JCM 10099 / NBRC 100826 / MSB8</strain>
    </source>
</reference>
<reference key="2">
    <citation type="journal article" date="1998" name="J. Bacteriol.">
        <title>Reverse gyrase from the hyperthermophilic bacterium Thermotoga maritima: properties and gene structure.</title>
        <authorList>
            <person name="Bouthier de la Tour C."/>
            <person name="Portemer C."/>
            <person name="Kaltoum H."/>
            <person name="Duguet M."/>
        </authorList>
    </citation>
    <scope>NUCLEOTIDE SEQUENCE [GENOMIC DNA] OF 1-276</scope>
    <source>
        <strain>ATCC 43589 / DSM 3109 / JCM 10099 / NBRC 100826 / MSB8</strain>
    </source>
</reference>
<reference key="3">
    <citation type="journal article" date="2001" name="FEBS Lett.">
        <title>A thermostable K(+)-stimulated vacuolar-type pyrophosphatase from the hyperthermophilic bacterium Thermotoga maritima.</title>
        <authorList>
            <person name="Perez-Castineira J.R."/>
            <person name="Lopez-Marques R.L."/>
            <person name="Losada M."/>
            <person name="Serrano A."/>
        </authorList>
    </citation>
    <scope>CHARACTERIZATION</scope>
    <scope>FUNCTION</scope>
    <scope>COFACTOR</scope>
    <scope>ACTIVITY REGULATION</scope>
    <scope>BIOPHYSICOCHEMICAL PROPERTIES</scope>
    <source>
        <strain>ATCC 43589 / DSM 3109 / JCM 10099 / NBRC 100826 / MSB8</strain>
    </source>
</reference>
<reference key="4">
    <citation type="journal article" date="2005" name="Biochemistry">
        <title>Membrane-bound pyrophosphatase of Thermotoga maritima requires sodium for activity.</title>
        <authorList>
            <person name="Belogurov G.A."/>
            <person name="Malinen A.M."/>
            <person name="Turkina M.V."/>
            <person name="Jalonen U."/>
            <person name="Rytkonen K."/>
            <person name="Baykov A.A."/>
            <person name="Lahti R."/>
        </authorList>
    </citation>
    <scope>CATALYTIC ACTIVITY</scope>
    <scope>ACTIVITY REGULATION</scope>
    <scope>MUTAGENESIS OF ASP-190 AND ASP-703</scope>
</reference>
<reference key="5">
    <citation type="journal article" date="2005" name="Biochim. Biophys. Acta">
        <title>Large-scale purification of the proton pumping pyrophosphatase from Thermotoga maritima: a 'Hot-Solve' method for isolation of recombinant thermophilic membrane proteins.</title>
        <authorList>
            <person name="Lopez-Marques R.L."/>
            <person name="Perez-Castineira J.R."/>
            <person name="Buch-Pedersen M.J."/>
            <person name="Marco S."/>
            <person name="Rigaud J.L."/>
            <person name="Palmgren M.G."/>
            <person name="Serrano A."/>
        </authorList>
    </citation>
    <scope>SUBUNIT</scope>
    <scope>SUBCELLULAR LOCATION</scope>
</reference>
<reference key="6">
    <citation type="journal article" date="2007" name="Biochemistry">
        <title>Na+-pyrophosphatase: a novel primary sodium pump.</title>
        <authorList>
            <person name="Malinen A.M."/>
            <person name="Belogurov G.A."/>
            <person name="Baykov A.A."/>
            <person name="Lahti R."/>
        </authorList>
    </citation>
    <scope>FUNCTION</scope>
    <scope>CATALYTIC ACTIVITY</scope>
</reference>
<reference key="7">
    <citation type="journal article" date="2012" name="Science">
        <title>The structure and catalytic cycle of a sodium-pumping pyrophosphatase.</title>
        <authorList>
            <person name="Kellosalo J."/>
            <person name="Kajander T."/>
            <person name="Kogan K."/>
            <person name="Pokharel K."/>
            <person name="Goldman A."/>
        </authorList>
    </citation>
    <scope>X-RAY CRYSTALLOGRAPHY (2.60 ANGSTROMS) IN COMPLEX WITH CALCIUM AND MAGNESIUM</scope>
    <scope>TOPOLOGY</scope>
    <scope>FUNCTION</scope>
    <scope>SUBUNIT</scope>
    <scope>METAL-BINDING SITES</scope>
    <scope>ACTIVITY REGULATION</scope>
    <scope>BIOPHYSICOCHEMICAL PROPERTIES</scope>
</reference>
<sequence>MYVAALFFLIPLVALGFAAANFAAVVRKPEGTERMKEISSYIRSGADSFLAHETKAIFKVAIVIAILLMIFTTWQTGVAFLLGAVMSASAGIVGMKMATRANVRVAEAARTTKKIGPALKVAYQGGSVMGLSVGGFALLGLVLVYLIFGKWMGQVDNLNIYTNWLGINFVPFAMTVSGYALGCSIIAMFDRVGGGVYTKAADMAADLVGKTELNLPEDDPRNPATIADNVGDNVGDVAGLGADLLESFVGAIVSSIILASYMFPIYVQKIGENLVHQVPKETIQALISYPIFFALVGLGCSMLGILYVIVKKPSDNPQRELNISLWTSALLTVVLTAFLTYFYLKDLQGLDVVGFRFGAISPWFSAIIGIFSGILIGFWAEYYTSYRYKPTQFLSKSSIEGTGMVISNGLSLGMKSVFPPTLTLVLGILFADYFAGLYGVAIAALGMLSFVATSVSVDSYGPIADNAGGISEMCELDPEVRKITDHLDAVGNTTAAIGKGFAIGSAIFAALSLFASYMFSQISPSDIGKPPSLVLLLNMLDARVIAGALLGAAITYYFSGYLISAVTKAAMKMVDEIRRQAREIPGLLEGKAKPDYNRCIEITSDNALKQMGYPAFIAILTPLVTGFLLGAEFVGGVLIGTVLSGAMLAILTANSGGAWDNAKKYLEAGNLEGYGKGSEPHKALVIGDTVGDPLKDTVGPSLDILIKIMSVVSVIAVSIFKHVHLF</sequence>
<name>HPPA_THEMA</name>
<organism>
    <name type="scientific">Thermotoga maritima (strain ATCC 43589 / DSM 3109 / JCM 10099 / NBRC 100826 / MSB8)</name>
    <dbReference type="NCBI Taxonomy" id="243274"/>
    <lineage>
        <taxon>Bacteria</taxon>
        <taxon>Thermotogati</taxon>
        <taxon>Thermotogota</taxon>
        <taxon>Thermotogae</taxon>
        <taxon>Thermotogales</taxon>
        <taxon>Thermotogaceae</taxon>
        <taxon>Thermotoga</taxon>
    </lineage>
</organism>
<accession>Q9S5X0</accession>
<accession>O51935</accession>
<dbReference type="EC" id="7.2.3.1" evidence="2 4 6"/>
<dbReference type="EMBL" id="AE000512">
    <property type="protein sequence ID" value="AAD35267.1"/>
    <property type="molecule type" value="Genomic_DNA"/>
</dbReference>
<dbReference type="EMBL" id="AF013268">
    <property type="protein sequence ID" value="AAC01564.2"/>
    <property type="molecule type" value="Genomic_DNA"/>
</dbReference>
<dbReference type="PIR" id="D72409">
    <property type="entry name" value="D72409"/>
</dbReference>
<dbReference type="RefSeq" id="NP_227989.1">
    <property type="nucleotide sequence ID" value="NC_000853.1"/>
</dbReference>
<dbReference type="RefSeq" id="WP_004082809.1">
    <property type="nucleotide sequence ID" value="NC_000853.1"/>
</dbReference>
<dbReference type="PDB" id="4AV3">
    <property type="method" value="X-ray"/>
    <property type="resolution" value="2.60 A"/>
    <property type="chains" value="A/B=2-726"/>
</dbReference>
<dbReference type="PDB" id="4AV6">
    <property type="method" value="X-ray"/>
    <property type="resolution" value="4.00 A"/>
    <property type="chains" value="A/B=2-726"/>
</dbReference>
<dbReference type="PDB" id="5LZQ">
    <property type="method" value="X-ray"/>
    <property type="resolution" value="3.50 A"/>
    <property type="chains" value="A/B=2-726"/>
</dbReference>
<dbReference type="PDB" id="5LZR">
    <property type="method" value="X-ray"/>
    <property type="resolution" value="4.00 A"/>
    <property type="chains" value="A/B=2-726"/>
</dbReference>
<dbReference type="PDB" id="6QXA">
    <property type="method" value="X-ray"/>
    <property type="resolution" value="3.41 A"/>
    <property type="chains" value="A/B/C/D=2-726"/>
</dbReference>
<dbReference type="PDB" id="8B21">
    <property type="method" value="X-ray"/>
    <property type="resolution" value="2.59 A"/>
    <property type="chains" value="A/B=2-726"/>
</dbReference>
<dbReference type="PDB" id="8B22">
    <property type="method" value="X-ray"/>
    <property type="resolution" value="3.98 A"/>
    <property type="chains" value="A/B=2-726"/>
</dbReference>
<dbReference type="PDB" id="8B23">
    <property type="method" value="X-ray"/>
    <property type="resolution" value="3.84 A"/>
    <property type="chains" value="A/B=2-726"/>
</dbReference>
<dbReference type="PDB" id="8B24">
    <property type="method" value="X-ray"/>
    <property type="resolution" value="4.53 A"/>
    <property type="chains" value="A/B=2-726"/>
</dbReference>
<dbReference type="PDBsum" id="4AV3"/>
<dbReference type="PDBsum" id="4AV6"/>
<dbReference type="PDBsum" id="5LZQ"/>
<dbReference type="PDBsum" id="5LZR"/>
<dbReference type="PDBsum" id="6QXA"/>
<dbReference type="PDBsum" id="8B21"/>
<dbReference type="PDBsum" id="8B22"/>
<dbReference type="PDBsum" id="8B23"/>
<dbReference type="PDBsum" id="8B24"/>
<dbReference type="SMR" id="Q9S5X0"/>
<dbReference type="DIP" id="DIP-61897N"/>
<dbReference type="STRING" id="243274.TM_0174"/>
<dbReference type="TCDB" id="3.A.10.1.4">
    <property type="family name" value="the h(+), na(+)-translocating pyrophosphatase (m(+)-ppase) family"/>
</dbReference>
<dbReference type="PaxDb" id="243274-THEMA_03930"/>
<dbReference type="EnsemblBacteria" id="AAD35267">
    <property type="protein sequence ID" value="AAD35267"/>
    <property type="gene ID" value="TM_0174"/>
</dbReference>
<dbReference type="KEGG" id="tma:TM0174"/>
<dbReference type="KEGG" id="tmi:THEMA_03930"/>
<dbReference type="KEGG" id="tmm:Tmari_0172"/>
<dbReference type="KEGG" id="tmw:THMA_0170"/>
<dbReference type="eggNOG" id="COG3808">
    <property type="taxonomic scope" value="Bacteria"/>
</dbReference>
<dbReference type="InParanoid" id="Q9S5X0"/>
<dbReference type="OrthoDB" id="9808652at2"/>
<dbReference type="BRENDA" id="3.6.1.1">
    <property type="organism ID" value="6331"/>
</dbReference>
<dbReference type="BRENDA" id="7.1.3.1">
    <property type="organism ID" value="6331"/>
</dbReference>
<dbReference type="BRENDA" id="7.1.3.2">
    <property type="organism ID" value="6331"/>
</dbReference>
<dbReference type="EvolutionaryTrace" id="Q9S5X0"/>
<dbReference type="Proteomes" id="UP000008183">
    <property type="component" value="Chromosome"/>
</dbReference>
<dbReference type="GO" id="GO:0016020">
    <property type="term" value="C:membrane"/>
    <property type="evidence" value="ECO:0000314"/>
    <property type="project" value="UniProtKB"/>
</dbReference>
<dbReference type="GO" id="GO:0005886">
    <property type="term" value="C:plasma membrane"/>
    <property type="evidence" value="ECO:0007669"/>
    <property type="project" value="UniProtKB-SubCell"/>
</dbReference>
<dbReference type="GO" id="GO:0005509">
    <property type="term" value="F:calcium ion binding"/>
    <property type="evidence" value="ECO:0000314"/>
    <property type="project" value="UniProtKB"/>
</dbReference>
<dbReference type="GO" id="GO:0009678">
    <property type="term" value="F:diphosphate hydrolysis-driven proton transmembrane transporter activity"/>
    <property type="evidence" value="ECO:0007669"/>
    <property type="project" value="UniProtKB-UniRule"/>
</dbReference>
<dbReference type="GO" id="GO:0004427">
    <property type="term" value="F:inorganic diphosphate phosphatase activity"/>
    <property type="evidence" value="ECO:0000314"/>
    <property type="project" value="UniProtKB"/>
</dbReference>
<dbReference type="GO" id="GO:0000287">
    <property type="term" value="F:magnesium ion binding"/>
    <property type="evidence" value="ECO:0000314"/>
    <property type="project" value="UniProtKB"/>
</dbReference>
<dbReference type="GO" id="GO:0030955">
    <property type="term" value="F:potassium ion binding"/>
    <property type="evidence" value="ECO:0007669"/>
    <property type="project" value="UniProtKB-UniRule"/>
</dbReference>
<dbReference type="GO" id="GO:0042803">
    <property type="term" value="F:protein homodimerization activity"/>
    <property type="evidence" value="ECO:0000353"/>
    <property type="project" value="UniProtKB"/>
</dbReference>
<dbReference type="GO" id="GO:0015081">
    <property type="term" value="F:sodium ion transmembrane transporter activity"/>
    <property type="evidence" value="ECO:0000314"/>
    <property type="project" value="UniProtKB"/>
</dbReference>
<dbReference type="GO" id="GO:0035725">
    <property type="term" value="P:sodium ion transmembrane transport"/>
    <property type="evidence" value="ECO:0000314"/>
    <property type="project" value="UniProtKB"/>
</dbReference>
<dbReference type="HAMAP" id="MF_01129">
    <property type="entry name" value="PPase_energized_pump"/>
    <property type="match status" value="1"/>
</dbReference>
<dbReference type="InterPro" id="IPR004131">
    <property type="entry name" value="PPase-energised_H-pump"/>
</dbReference>
<dbReference type="NCBIfam" id="NF001954">
    <property type="entry name" value="PRK00733.2-2"/>
    <property type="match status" value="1"/>
</dbReference>
<dbReference type="NCBIfam" id="NF001960">
    <property type="entry name" value="PRK00733.3-5"/>
    <property type="match status" value="1"/>
</dbReference>
<dbReference type="NCBIfam" id="TIGR01104">
    <property type="entry name" value="V_PPase"/>
    <property type="match status" value="1"/>
</dbReference>
<dbReference type="PANTHER" id="PTHR31998">
    <property type="entry name" value="K(+)-INSENSITIVE PYROPHOSPHATE-ENERGIZED PROTON PUMP"/>
    <property type="match status" value="1"/>
</dbReference>
<dbReference type="Pfam" id="PF03030">
    <property type="entry name" value="H_PPase"/>
    <property type="match status" value="1"/>
</dbReference>
<dbReference type="PIRSF" id="PIRSF001265">
    <property type="entry name" value="H+-PPase"/>
    <property type="match status" value="1"/>
</dbReference>
<keyword id="KW-0002">3D-structure</keyword>
<keyword id="KW-0106">Calcium</keyword>
<keyword id="KW-0997">Cell inner membrane</keyword>
<keyword id="KW-1003">Cell membrane</keyword>
<keyword id="KW-0406">Ion transport</keyword>
<keyword id="KW-0460">Magnesium</keyword>
<keyword id="KW-0472">Membrane</keyword>
<keyword id="KW-0479">Metal-binding</keyword>
<keyword id="KW-0630">Potassium</keyword>
<keyword id="KW-1185">Reference proteome</keyword>
<keyword id="KW-0915">Sodium</keyword>
<keyword id="KW-0739">Sodium transport</keyword>
<keyword id="KW-1278">Translocase</keyword>
<keyword id="KW-0812">Transmembrane</keyword>
<keyword id="KW-1133">Transmembrane helix</keyword>
<keyword id="KW-0813">Transport</keyword>
<protein>
    <recommendedName>
        <fullName>K(+)-stimulated pyrophosphate-energized sodium pump</fullName>
        <ecNumber evidence="2 4 6">7.2.3.1</ecNumber>
    </recommendedName>
    <alternativeName>
        <fullName evidence="2">Membrane-bound sodium-translocating pyrophosphatase</fullName>
    </alternativeName>
    <alternativeName>
        <fullName evidence="2">Pyrophosphate-energized inorganic pyrophosphatase</fullName>
        <shortName evidence="2">Na(+)-PPase</shortName>
    </alternativeName>
    <alternativeName>
        <fullName>Tm-PPase</fullName>
    </alternativeName>
</protein>
<gene>
    <name evidence="2" type="primary">hppA</name>
    <name type="ordered locus">TM_0174</name>
</gene>